<comment type="function">
    <text>Required for activation of most nif operons, which are directly involved in nitrogen fixation.</text>
</comment>
<comment type="subunit">
    <text>Interacts with sigma-54.</text>
</comment>
<organism>
    <name type="scientific">Rhodobacter capsulatus</name>
    <name type="common">Rhodopseudomonas capsulata</name>
    <dbReference type="NCBI Taxonomy" id="1061"/>
    <lineage>
        <taxon>Bacteria</taxon>
        <taxon>Pseudomonadati</taxon>
        <taxon>Pseudomonadota</taxon>
        <taxon>Alphaproteobacteria</taxon>
        <taxon>Rhodobacterales</taxon>
        <taxon>Rhodobacter group</taxon>
        <taxon>Rhodobacter</taxon>
    </lineage>
</organism>
<sequence length="579" mass="62926">MTDQQSRPASPRRRSTQSIADRLALDALYEIAKTFAAAPDPVAEVPQIFNVLSSFLDLRHGVLALLAEPGEGAGVNPYVIAATAFQRSPEAPAADVLPDAVARIVFRSGVPFVSFDLVAEFGAEAVPKRLRDAGQTLIAVPLRDPERSHFVLGVLAAYRSHDHNRSGFSDADVRVLTMVASLLEQALRFRRRIARDRERALEDTRRMLQTVTEQRGPAAPVSLDGIVGSSPAIAEVVAQIKRVASTRMPVLLRGESGTGKELFARAVHAQSPRAKGPFIRVNCAALSETLLESELFGHEKGAFTGATALKKGRFELADGGTLFLDEIGEISPAFQSKLLRVLQEGEFERVGGAKTIKVDTRIVAATNRDLEDAVARGQFRADLYFRICVVPIVLPPLRNRKSDIKPLAQLFLDRFNKQNATNVKFAADAFDQICRCQFPGNVRELENCVNRAAALSDGAIVLAEELACRQGACLSAELFRLQDGTSPIGGLAVGRVITPTVRVSAPPPEPAPAPEPAPEAPPREEVPLRTKTAQLSREELLRALESAGWVQAKAARLLGMTPRQIAYALQKFEIELRKI</sequence>
<dbReference type="EMBL" id="X07567">
    <property type="protein sequence ID" value="CAB53157.1"/>
    <property type="molecule type" value="Genomic_DNA"/>
</dbReference>
<dbReference type="PIR" id="S03828">
    <property type="entry name" value="S03828"/>
</dbReference>
<dbReference type="SMR" id="P0CY94"/>
<dbReference type="GO" id="GO:0005524">
    <property type="term" value="F:ATP binding"/>
    <property type="evidence" value="ECO:0007669"/>
    <property type="project" value="UniProtKB-KW"/>
</dbReference>
<dbReference type="GO" id="GO:0016887">
    <property type="term" value="F:ATP hydrolysis activity"/>
    <property type="evidence" value="ECO:0007669"/>
    <property type="project" value="InterPro"/>
</dbReference>
<dbReference type="GO" id="GO:0003700">
    <property type="term" value="F:DNA-binding transcription factor activity"/>
    <property type="evidence" value="ECO:0007669"/>
    <property type="project" value="InterPro"/>
</dbReference>
<dbReference type="GO" id="GO:0046872">
    <property type="term" value="F:metal ion binding"/>
    <property type="evidence" value="ECO:0007669"/>
    <property type="project" value="UniProtKB-KW"/>
</dbReference>
<dbReference type="GO" id="GO:0043565">
    <property type="term" value="F:sequence-specific DNA binding"/>
    <property type="evidence" value="ECO:0007669"/>
    <property type="project" value="InterPro"/>
</dbReference>
<dbReference type="GO" id="GO:0009399">
    <property type="term" value="P:nitrogen fixation"/>
    <property type="evidence" value="ECO:0007669"/>
    <property type="project" value="UniProtKB-KW"/>
</dbReference>
<dbReference type="GO" id="GO:0000160">
    <property type="term" value="P:phosphorelay signal transduction system"/>
    <property type="evidence" value="ECO:0007669"/>
    <property type="project" value="UniProtKB-KW"/>
</dbReference>
<dbReference type="CDD" id="cd00009">
    <property type="entry name" value="AAA"/>
    <property type="match status" value="1"/>
</dbReference>
<dbReference type="FunFam" id="3.40.50.300:FF:000006">
    <property type="entry name" value="DNA-binding transcriptional regulator NtrC"/>
    <property type="match status" value="1"/>
</dbReference>
<dbReference type="Gene3D" id="1.10.8.60">
    <property type="match status" value="1"/>
</dbReference>
<dbReference type="Gene3D" id="3.30.450.40">
    <property type="match status" value="1"/>
</dbReference>
<dbReference type="Gene3D" id="1.10.10.60">
    <property type="entry name" value="Homeodomain-like"/>
    <property type="match status" value="1"/>
</dbReference>
<dbReference type="Gene3D" id="3.40.50.300">
    <property type="entry name" value="P-loop containing nucleotide triphosphate hydrolases"/>
    <property type="match status" value="1"/>
</dbReference>
<dbReference type="InterPro" id="IPR003593">
    <property type="entry name" value="AAA+_ATPase"/>
</dbReference>
<dbReference type="InterPro" id="IPR003018">
    <property type="entry name" value="GAF"/>
</dbReference>
<dbReference type="InterPro" id="IPR029016">
    <property type="entry name" value="GAF-like_dom_sf"/>
</dbReference>
<dbReference type="InterPro" id="IPR009057">
    <property type="entry name" value="Homeodomain-like_sf"/>
</dbReference>
<dbReference type="InterPro" id="IPR002197">
    <property type="entry name" value="HTH_Fis"/>
</dbReference>
<dbReference type="InterPro" id="IPR010113">
    <property type="entry name" value="Nif-specific_regulatory_prot"/>
</dbReference>
<dbReference type="InterPro" id="IPR027417">
    <property type="entry name" value="P-loop_NTPase"/>
</dbReference>
<dbReference type="InterPro" id="IPR002078">
    <property type="entry name" value="Sigma_54_int"/>
</dbReference>
<dbReference type="InterPro" id="IPR025662">
    <property type="entry name" value="Sigma_54_int_dom_ATP-bd_1"/>
</dbReference>
<dbReference type="InterPro" id="IPR025943">
    <property type="entry name" value="Sigma_54_int_dom_ATP-bd_2"/>
</dbReference>
<dbReference type="InterPro" id="IPR025944">
    <property type="entry name" value="Sigma_54_int_dom_CS"/>
</dbReference>
<dbReference type="NCBIfam" id="TIGR01817">
    <property type="entry name" value="nifA"/>
    <property type="match status" value="1"/>
</dbReference>
<dbReference type="PANTHER" id="PTHR32071:SF117">
    <property type="entry name" value="PTS-DEPENDENT DIHYDROXYACETONE KINASE OPERON REGULATORY PROTEIN-RELATED"/>
    <property type="match status" value="1"/>
</dbReference>
<dbReference type="PANTHER" id="PTHR32071">
    <property type="entry name" value="TRANSCRIPTIONAL REGULATORY PROTEIN"/>
    <property type="match status" value="1"/>
</dbReference>
<dbReference type="Pfam" id="PF13185">
    <property type="entry name" value="GAF_2"/>
    <property type="match status" value="1"/>
</dbReference>
<dbReference type="Pfam" id="PF02954">
    <property type="entry name" value="HTH_8"/>
    <property type="match status" value="1"/>
</dbReference>
<dbReference type="Pfam" id="PF00158">
    <property type="entry name" value="Sigma54_activat"/>
    <property type="match status" value="1"/>
</dbReference>
<dbReference type="PRINTS" id="PR01590">
    <property type="entry name" value="HTHFIS"/>
</dbReference>
<dbReference type="SMART" id="SM00382">
    <property type="entry name" value="AAA"/>
    <property type="match status" value="1"/>
</dbReference>
<dbReference type="SMART" id="SM00065">
    <property type="entry name" value="GAF"/>
    <property type="match status" value="1"/>
</dbReference>
<dbReference type="SUPFAM" id="SSF55781">
    <property type="entry name" value="GAF domain-like"/>
    <property type="match status" value="1"/>
</dbReference>
<dbReference type="SUPFAM" id="SSF46689">
    <property type="entry name" value="Homeodomain-like"/>
    <property type="match status" value="1"/>
</dbReference>
<dbReference type="SUPFAM" id="SSF52540">
    <property type="entry name" value="P-loop containing nucleoside triphosphate hydrolases"/>
    <property type="match status" value="1"/>
</dbReference>
<dbReference type="PROSITE" id="PS00675">
    <property type="entry name" value="SIGMA54_INTERACT_1"/>
    <property type="match status" value="1"/>
</dbReference>
<dbReference type="PROSITE" id="PS00676">
    <property type="entry name" value="SIGMA54_INTERACT_2"/>
    <property type="match status" value="1"/>
</dbReference>
<dbReference type="PROSITE" id="PS00688">
    <property type="entry name" value="SIGMA54_INTERACT_3"/>
    <property type="match status" value="1"/>
</dbReference>
<dbReference type="PROSITE" id="PS50045">
    <property type="entry name" value="SIGMA54_INTERACT_4"/>
    <property type="match status" value="1"/>
</dbReference>
<proteinExistence type="predicted"/>
<feature type="chain" id="PRO_0000081315" description="Nif-specific regulatory protein">
    <location>
        <begin position="1"/>
        <end position="579"/>
    </location>
</feature>
<feature type="domain" description="GAF">
    <location>
        <begin position="40"/>
        <end position="187"/>
    </location>
</feature>
<feature type="domain" description="Sigma-54 factor interaction" evidence="3">
    <location>
        <begin position="226"/>
        <end position="454"/>
    </location>
</feature>
<feature type="repeat" description="1">
    <location>
        <begin position="505"/>
        <end position="506"/>
    </location>
</feature>
<feature type="repeat" description="2">
    <location>
        <begin position="507"/>
        <end position="508"/>
    </location>
</feature>
<feature type="repeat" description="3">
    <location>
        <begin position="509"/>
        <end position="510"/>
    </location>
</feature>
<feature type="repeat" description="4">
    <location>
        <begin position="511"/>
        <end position="512"/>
    </location>
</feature>
<feature type="repeat" description="5">
    <location>
        <begin position="513"/>
        <end position="514"/>
    </location>
</feature>
<feature type="repeat" description="6">
    <location>
        <begin position="515"/>
        <end position="516"/>
    </location>
</feature>
<feature type="repeat" description="7">
    <location>
        <begin position="517"/>
        <end position="518"/>
    </location>
</feature>
<feature type="DNA-binding region" description="H-T-H motif" evidence="1">
    <location>
        <begin position="551"/>
        <end position="570"/>
    </location>
</feature>
<feature type="region of interest" description="Inter-domain linker">
    <location>
        <begin position="464"/>
        <end position="536"/>
    </location>
</feature>
<feature type="region of interest" description="Disordered" evidence="4">
    <location>
        <begin position="502"/>
        <end position="529"/>
    </location>
</feature>
<feature type="region of interest" description="7 X 2 AA tandem repeats of X-P">
    <location>
        <begin position="505"/>
        <end position="518"/>
    </location>
</feature>
<feature type="region of interest" description="C-terminal DNA-binding domain">
    <location>
        <begin position="537"/>
        <end position="579"/>
    </location>
</feature>
<feature type="compositionally biased region" description="Pro residues" evidence="4">
    <location>
        <begin position="505"/>
        <end position="520"/>
    </location>
</feature>
<feature type="binding site" evidence="3">
    <location>
        <begin position="254"/>
        <end position="261"/>
    </location>
    <ligand>
        <name>ATP</name>
        <dbReference type="ChEBI" id="CHEBI:30616"/>
    </ligand>
</feature>
<feature type="binding site" evidence="3">
    <location>
        <begin position="317"/>
        <end position="326"/>
    </location>
    <ligand>
        <name>ATP</name>
        <dbReference type="ChEBI" id="CHEBI:30616"/>
    </ligand>
</feature>
<feature type="binding site" evidence="2">
    <location>
        <position position="468"/>
    </location>
    <ligand>
        <name>a divalent metal cation</name>
        <dbReference type="ChEBI" id="CHEBI:60240"/>
    </ligand>
</feature>
<feature type="binding site" evidence="2">
    <location>
        <position position="473"/>
    </location>
    <ligand>
        <name>a divalent metal cation</name>
        <dbReference type="ChEBI" id="CHEBI:60240"/>
    </ligand>
</feature>
<evidence type="ECO:0000250" key="1"/>
<evidence type="ECO:0000250" key="2">
    <source>
        <dbReference type="UniProtKB" id="P05407"/>
    </source>
</evidence>
<evidence type="ECO:0000255" key="3">
    <source>
        <dbReference type="PROSITE-ProRule" id="PRU00193"/>
    </source>
</evidence>
<evidence type="ECO:0000256" key="4">
    <source>
        <dbReference type="SAM" id="MobiDB-lite"/>
    </source>
</evidence>
<protein>
    <recommendedName>
        <fullName>Nif-specific regulatory protein</fullName>
    </recommendedName>
</protein>
<reference key="1">
    <citation type="journal article" date="1988" name="Mol. Gen. Genet.">
        <title>Genetic characterization and sequence analysis of the duplicated nifA/nifB gene region of Rhodobacter capsulatus.</title>
        <authorList>
            <person name="Masepohl P."/>
            <person name="Klipp W."/>
            <person name="Puehler A."/>
        </authorList>
    </citation>
    <scope>NUCLEOTIDE SEQUENCE [GENOMIC DNA]</scope>
</reference>
<reference key="2">
    <citation type="submission" date="1999-08" db="EMBL/GenBank/DDBJ databases">
        <authorList>
            <person name="Masepohl P."/>
            <person name="Klipp W."/>
            <person name="Puehler A."/>
        </authorList>
    </citation>
    <scope>SEQUENCE REVISION TO N-TERMINUS</scope>
</reference>
<gene>
    <name type="primary">nifA1</name>
    <name type="synonym">nifA</name>
</gene>
<accession>P0CY94</accession>
<accession>P09434</accession>
<accession>Q8RU04</accession>
<keyword id="KW-0010">Activator</keyword>
<keyword id="KW-0067">ATP-binding</keyword>
<keyword id="KW-0238">DNA-binding</keyword>
<keyword id="KW-0479">Metal-binding</keyword>
<keyword id="KW-0535">Nitrogen fixation</keyword>
<keyword id="KW-0547">Nucleotide-binding</keyword>
<keyword id="KW-0677">Repeat</keyword>
<keyword id="KW-0804">Transcription</keyword>
<keyword id="KW-0805">Transcription regulation</keyword>
<keyword id="KW-0902">Two-component regulatory system</keyword>
<name>NIFA_RHOCA</name>